<sequence length="105" mass="11235">MALWTRLVPLLALLALWAPAPAHAFVNQHLCGSHLVEALYLVCGERGFFYTPKARREVEGPQVGALELAGGPGAGGLEGPPQKRGIVEQCCAGVCSLYQLENYCN</sequence>
<gene>
    <name type="primary">INS</name>
</gene>
<protein>
    <recommendedName>
        <fullName>Insulin</fullName>
    </recommendedName>
    <component>
        <recommendedName>
            <fullName>Insulin B chain</fullName>
        </recommendedName>
    </component>
    <component>
        <recommendedName>
            <fullName>Insulin A chain</fullName>
        </recommendedName>
    </component>
</protein>
<keyword id="KW-0002">3D-structure</keyword>
<keyword id="KW-0119">Carbohydrate metabolism</keyword>
<keyword id="KW-0165">Cleavage on pair of basic residues</keyword>
<keyword id="KW-0903">Direct protein sequencing</keyword>
<keyword id="KW-1015">Disulfide bond</keyword>
<keyword id="KW-0313">Glucose metabolism</keyword>
<keyword id="KW-0372">Hormone</keyword>
<keyword id="KW-1185">Reference proteome</keyword>
<keyword id="KW-0964">Secreted</keyword>
<keyword id="KW-0732">Signal</keyword>
<organism>
    <name type="scientific">Ovis aries</name>
    <name type="common">Sheep</name>
    <dbReference type="NCBI Taxonomy" id="9940"/>
    <lineage>
        <taxon>Eukaryota</taxon>
        <taxon>Metazoa</taxon>
        <taxon>Chordata</taxon>
        <taxon>Craniata</taxon>
        <taxon>Vertebrata</taxon>
        <taxon>Euteleostomi</taxon>
        <taxon>Mammalia</taxon>
        <taxon>Eutheria</taxon>
        <taxon>Laurasiatheria</taxon>
        <taxon>Artiodactyla</taxon>
        <taxon>Ruminantia</taxon>
        <taxon>Pecora</taxon>
        <taxon>Bovidae</taxon>
        <taxon>Caprinae</taxon>
        <taxon>Ovis</taxon>
    </lineage>
</organism>
<feature type="signal peptide" evidence="2">
    <location>
        <begin position="1"/>
        <end position="24"/>
    </location>
</feature>
<feature type="peptide" id="PRO_0000015909" description="Insulin B chain">
    <location>
        <begin position="25"/>
        <end position="54"/>
    </location>
</feature>
<feature type="propeptide" id="PRO_0000015910" description="C peptide">
    <location>
        <begin position="57"/>
        <end position="82"/>
    </location>
</feature>
<feature type="peptide" id="PRO_0000015911" description="Insulin A chain">
    <location>
        <begin position="85"/>
        <end position="105"/>
    </location>
</feature>
<feature type="disulfide bond" description="Interchain (between B and A chains)" evidence="1">
    <location>
        <begin position="31"/>
        <end position="91"/>
    </location>
</feature>
<feature type="disulfide bond" description="Interchain (between B and A chains)" evidence="1">
    <location>
        <begin position="43"/>
        <end position="104"/>
    </location>
</feature>
<feature type="disulfide bond" evidence="1">
    <location>
        <begin position="90"/>
        <end position="95"/>
    </location>
</feature>
<dbReference type="EMBL" id="U00659">
    <property type="protein sequence ID" value="AAB60625.1"/>
    <property type="molecule type" value="Genomic_DNA"/>
</dbReference>
<dbReference type="PIR" id="S16430">
    <property type="entry name" value="INSH"/>
</dbReference>
<dbReference type="PDB" id="6CE7">
    <property type="method" value="EM"/>
    <property type="resolution" value="7.40 A"/>
    <property type="chains" value="O=25-54"/>
</dbReference>
<dbReference type="PDB" id="6CE9">
    <property type="method" value="EM"/>
    <property type="resolution" value="4.30 A"/>
    <property type="chains" value="L/O=25-54"/>
</dbReference>
<dbReference type="PDB" id="6CEB">
    <property type="method" value="EM"/>
    <property type="resolution" value="4.70 A"/>
    <property type="chains" value="L/O=25-54"/>
</dbReference>
<dbReference type="PDBsum" id="6CE7"/>
<dbReference type="PDBsum" id="6CE9"/>
<dbReference type="PDBsum" id="6CEB"/>
<dbReference type="BMRB" id="P01318"/>
<dbReference type="EMDB" id="EMD-7461"/>
<dbReference type="EMDB" id="EMD-7462"/>
<dbReference type="EMDB" id="EMD-7463"/>
<dbReference type="SMR" id="P01318"/>
<dbReference type="IntAct" id="P01318">
    <property type="interactions" value="1"/>
</dbReference>
<dbReference type="Ensembl" id="ENSOART00215097986">
    <property type="protein sequence ID" value="ENSOARP00215052682"/>
    <property type="gene ID" value="ENSOARG00215058474"/>
</dbReference>
<dbReference type="Ensembl" id="ENSOART00225073976">
    <property type="protein sequence ID" value="ENSOARP00225037538"/>
    <property type="gene ID" value="ENSOARG00225044736"/>
</dbReference>
<dbReference type="Proteomes" id="UP000002356">
    <property type="component" value="Unplaced"/>
</dbReference>
<dbReference type="GO" id="GO:0005615">
    <property type="term" value="C:extracellular space"/>
    <property type="evidence" value="ECO:0000314"/>
    <property type="project" value="AgBase"/>
</dbReference>
<dbReference type="GO" id="GO:0005179">
    <property type="term" value="F:hormone activity"/>
    <property type="evidence" value="ECO:0007669"/>
    <property type="project" value="UniProtKB-KW"/>
</dbReference>
<dbReference type="GO" id="GO:0005159">
    <property type="term" value="F:insulin-like growth factor receptor binding"/>
    <property type="evidence" value="ECO:0000250"/>
    <property type="project" value="AgBase"/>
</dbReference>
<dbReference type="GO" id="GO:1904927">
    <property type="term" value="P:cellular response to palmitoleic acid"/>
    <property type="evidence" value="ECO:0000314"/>
    <property type="project" value="AgBase"/>
</dbReference>
<dbReference type="GO" id="GO:0042593">
    <property type="term" value="P:glucose homeostasis"/>
    <property type="evidence" value="ECO:0007669"/>
    <property type="project" value="TreeGrafter"/>
</dbReference>
<dbReference type="GO" id="GO:0006006">
    <property type="term" value="P:glucose metabolic process"/>
    <property type="evidence" value="ECO:0007669"/>
    <property type="project" value="UniProtKB-KW"/>
</dbReference>
<dbReference type="GO" id="GO:0050714">
    <property type="term" value="P:positive regulation of protein secretion"/>
    <property type="evidence" value="ECO:0007669"/>
    <property type="project" value="TreeGrafter"/>
</dbReference>
<dbReference type="GO" id="GO:1903576">
    <property type="term" value="P:response to L-arginine"/>
    <property type="evidence" value="ECO:0000250"/>
    <property type="project" value="AgBase"/>
</dbReference>
<dbReference type="CDD" id="cd04367">
    <property type="entry name" value="IlGF_insulin_like"/>
    <property type="match status" value="1"/>
</dbReference>
<dbReference type="FunFam" id="1.10.100.10:FF:000003">
    <property type="entry name" value="Insulin"/>
    <property type="match status" value="1"/>
</dbReference>
<dbReference type="Gene3D" id="1.10.100.10">
    <property type="entry name" value="Insulin-like"/>
    <property type="match status" value="1"/>
</dbReference>
<dbReference type="InterPro" id="IPR004825">
    <property type="entry name" value="Insulin"/>
</dbReference>
<dbReference type="InterPro" id="IPR016179">
    <property type="entry name" value="Insulin-like"/>
</dbReference>
<dbReference type="InterPro" id="IPR036438">
    <property type="entry name" value="Insulin-like_sf"/>
</dbReference>
<dbReference type="InterPro" id="IPR022353">
    <property type="entry name" value="Insulin_CS"/>
</dbReference>
<dbReference type="InterPro" id="IPR022352">
    <property type="entry name" value="Insulin_family"/>
</dbReference>
<dbReference type="PANTHER" id="PTHR11454:SF9">
    <property type="entry name" value="INSULIN"/>
    <property type="match status" value="1"/>
</dbReference>
<dbReference type="PANTHER" id="PTHR11454">
    <property type="entry name" value="INSULIN/INSULIN GROWTH FACTOR"/>
    <property type="match status" value="1"/>
</dbReference>
<dbReference type="Pfam" id="PF00049">
    <property type="entry name" value="Insulin"/>
    <property type="match status" value="1"/>
</dbReference>
<dbReference type="PRINTS" id="PR00277">
    <property type="entry name" value="INSULIN"/>
</dbReference>
<dbReference type="PRINTS" id="PR00276">
    <property type="entry name" value="INSULINFAMLY"/>
</dbReference>
<dbReference type="SMART" id="SM00078">
    <property type="entry name" value="IlGF"/>
    <property type="match status" value="1"/>
</dbReference>
<dbReference type="SUPFAM" id="SSF56994">
    <property type="entry name" value="Insulin-like"/>
    <property type="match status" value="1"/>
</dbReference>
<dbReference type="PROSITE" id="PS00262">
    <property type="entry name" value="INSULIN"/>
    <property type="match status" value="1"/>
</dbReference>
<name>INS_SHEEP</name>
<comment type="function">
    <text>Insulin decreases blood glucose concentration. It increases cell permeability to monosaccharides, amino acids and fatty acids. It accelerates glycolysis, the pentose phosphate cycle, and glycogen synthesis in liver.</text>
</comment>
<comment type="subunit">
    <text evidence="1">Heterodimer of a B chain and an A chain linked by two disulfide bonds.</text>
</comment>
<comment type="subcellular location">
    <subcellularLocation>
        <location>Secreted</location>
    </subcellularLocation>
</comment>
<comment type="similarity">
    <text evidence="3">Belongs to the insulin family.</text>
</comment>
<accession>P01318</accession>
<reference key="1">
    <citation type="journal article" date="1994" name="DNA Cell Biol.">
        <title>Characterization of the linked ovine insulin and insulin-like growth factor-II genes.</title>
        <authorList>
            <person name="Ohlsen S.M."/>
            <person name="Lugenbeel K.A."/>
            <person name="Wong E.A."/>
        </authorList>
    </citation>
    <scope>NUCLEOTIDE SEQUENCE [GENOMIC DNA]</scope>
</reference>
<reference key="2">
    <citation type="journal article" date="1955" name="Biochem. J.">
        <title>The structure of pig and sheep insulins.</title>
        <authorList>
            <person name="Brown H."/>
            <person name="Sanger F."/>
            <person name="Kitai R."/>
        </authorList>
    </citation>
    <scope>PROTEIN SEQUENCE OF 25-54 AND 85-105</scope>
</reference>
<reference key="3">
    <citation type="journal article" date="1972" name="J. Biol. Chem.">
        <title>Determination of the amino acid sequence of the monkey, sheep, and dog proinsulin C-peptides by a semi-micro Edman degradation procedure.</title>
        <authorList>
            <person name="Peterson J.D."/>
            <person name="Nehrlich S."/>
            <person name="Oyer P.E."/>
            <person name="Steiner D.F."/>
        </authorList>
    </citation>
    <scope>PROTEIN SEQUENCE OF 57-82</scope>
</reference>
<evidence type="ECO:0000250" key="1">
    <source>
        <dbReference type="UniProtKB" id="P01308"/>
    </source>
</evidence>
<evidence type="ECO:0000269" key="2">
    <source>
    </source>
</evidence>
<evidence type="ECO:0000305" key="3"/>
<proteinExistence type="evidence at protein level"/>